<evidence type="ECO:0000255" key="1">
    <source>
        <dbReference type="HAMAP-Rule" id="MF_00354"/>
    </source>
</evidence>
<name>IDI2_RICCK</name>
<proteinExistence type="inferred from homology"/>
<keyword id="KW-0963">Cytoplasm</keyword>
<keyword id="KW-0285">Flavoprotein</keyword>
<keyword id="KW-0288">FMN</keyword>
<keyword id="KW-0413">Isomerase</keyword>
<keyword id="KW-0414">Isoprene biosynthesis</keyword>
<keyword id="KW-0460">Magnesium</keyword>
<keyword id="KW-0479">Metal-binding</keyword>
<keyword id="KW-0521">NADP</keyword>
<organism>
    <name type="scientific">Rickettsia canadensis (strain McKiel)</name>
    <dbReference type="NCBI Taxonomy" id="293613"/>
    <lineage>
        <taxon>Bacteria</taxon>
        <taxon>Pseudomonadati</taxon>
        <taxon>Pseudomonadota</taxon>
        <taxon>Alphaproteobacteria</taxon>
        <taxon>Rickettsiales</taxon>
        <taxon>Rickettsiaceae</taxon>
        <taxon>Rickettsieae</taxon>
        <taxon>Rickettsia</taxon>
        <taxon>belli group</taxon>
    </lineage>
</organism>
<protein>
    <recommendedName>
        <fullName evidence="1">Isopentenyl-diphosphate delta-isomerase</fullName>
        <shortName evidence="1">IPP isomerase</shortName>
        <ecNumber evidence="1">5.3.3.2</ecNumber>
    </recommendedName>
    <alternativeName>
        <fullName evidence="1">Isopentenyl diphosphate:dimethylallyl diphosphate isomerase</fullName>
    </alternativeName>
    <alternativeName>
        <fullName evidence="1">Isopentenyl pyrophosphate isomerase</fullName>
    </alternativeName>
    <alternativeName>
        <fullName evidence="1">Type 2 isopentenyl diphosphate isomerase</fullName>
        <shortName evidence="1">IDI-2</shortName>
    </alternativeName>
</protein>
<comment type="function">
    <text evidence="1">Involved in the biosynthesis of isoprenoids. Catalyzes the 1,3-allylic rearrangement of the homoallylic substrate isopentenyl (IPP) to its allylic isomer, dimethylallyl diphosphate (DMAPP).</text>
</comment>
<comment type="catalytic activity">
    <reaction evidence="1">
        <text>isopentenyl diphosphate = dimethylallyl diphosphate</text>
        <dbReference type="Rhea" id="RHEA:23284"/>
        <dbReference type="ChEBI" id="CHEBI:57623"/>
        <dbReference type="ChEBI" id="CHEBI:128769"/>
        <dbReference type="EC" id="5.3.3.2"/>
    </reaction>
</comment>
<comment type="cofactor">
    <cofactor evidence="1">
        <name>FMN</name>
        <dbReference type="ChEBI" id="CHEBI:58210"/>
    </cofactor>
</comment>
<comment type="cofactor">
    <cofactor evidence="1">
        <name>NADPH</name>
        <dbReference type="ChEBI" id="CHEBI:57783"/>
    </cofactor>
</comment>
<comment type="cofactor">
    <cofactor evidence="1">
        <name>Mg(2+)</name>
        <dbReference type="ChEBI" id="CHEBI:18420"/>
    </cofactor>
</comment>
<comment type="subunit">
    <text evidence="1">Homooctamer. Dimer of tetramers.</text>
</comment>
<comment type="subcellular location">
    <subcellularLocation>
        <location evidence="1">Cytoplasm</location>
    </subcellularLocation>
</comment>
<comment type="similarity">
    <text evidence="1">Belongs to the IPP isomerase type 2 family.</text>
</comment>
<feature type="chain" id="PRO_1000048455" description="Isopentenyl-diphosphate delta-isomerase">
    <location>
        <begin position="1"/>
        <end position="342"/>
    </location>
</feature>
<feature type="binding site" evidence="1">
    <location>
        <begin position="11"/>
        <end position="12"/>
    </location>
    <ligand>
        <name>substrate</name>
    </ligand>
</feature>
<feature type="binding site" evidence="1">
    <location>
        <position position="68"/>
    </location>
    <ligand>
        <name>FMN</name>
        <dbReference type="ChEBI" id="CHEBI:58210"/>
    </ligand>
</feature>
<feature type="binding site" evidence="1">
    <location>
        <begin position="69"/>
        <end position="71"/>
    </location>
    <ligand>
        <name>FMN</name>
        <dbReference type="ChEBI" id="CHEBI:58210"/>
    </ligand>
</feature>
<feature type="binding site" evidence="1">
    <location>
        <begin position="99"/>
        <end position="101"/>
    </location>
    <ligand>
        <name>substrate</name>
    </ligand>
</feature>
<feature type="binding site" evidence="1">
    <location>
        <position position="99"/>
    </location>
    <ligand>
        <name>FMN</name>
        <dbReference type="ChEBI" id="CHEBI:58210"/>
    </ligand>
</feature>
<feature type="binding site" evidence="1">
    <location>
        <position position="127"/>
    </location>
    <ligand>
        <name>FMN</name>
        <dbReference type="ChEBI" id="CHEBI:58210"/>
    </ligand>
</feature>
<feature type="binding site" evidence="1">
    <location>
        <position position="162"/>
    </location>
    <ligand>
        <name>substrate</name>
    </ligand>
</feature>
<feature type="binding site" evidence="1">
    <location>
        <position position="163"/>
    </location>
    <ligand>
        <name>Mg(2+)</name>
        <dbReference type="ChEBI" id="CHEBI:18420"/>
    </ligand>
</feature>
<feature type="binding site" evidence="1">
    <location>
        <position position="194"/>
    </location>
    <ligand>
        <name>FMN</name>
        <dbReference type="ChEBI" id="CHEBI:58210"/>
    </ligand>
</feature>
<feature type="binding site" evidence="1">
    <location>
        <position position="224"/>
    </location>
    <ligand>
        <name>FMN</name>
        <dbReference type="ChEBI" id="CHEBI:58210"/>
    </ligand>
</feature>
<feature type="binding site" evidence="1">
    <location>
        <begin position="274"/>
        <end position="276"/>
    </location>
    <ligand>
        <name>FMN</name>
        <dbReference type="ChEBI" id="CHEBI:58210"/>
    </ligand>
</feature>
<feature type="binding site" evidence="1">
    <location>
        <begin position="295"/>
        <end position="296"/>
    </location>
    <ligand>
        <name>FMN</name>
        <dbReference type="ChEBI" id="CHEBI:58210"/>
    </ligand>
</feature>
<reference key="1">
    <citation type="submission" date="2007-09" db="EMBL/GenBank/DDBJ databases">
        <title>Complete genome sequence of Rickettsia canadensis.</title>
        <authorList>
            <person name="Madan A."/>
            <person name="Fahey J."/>
            <person name="Helton E."/>
            <person name="Ketteman M."/>
            <person name="Madan A."/>
            <person name="Rodrigues S."/>
            <person name="Sanchez A."/>
            <person name="Whiting M."/>
            <person name="Dasch G."/>
            <person name="Eremeeva M."/>
        </authorList>
    </citation>
    <scope>NUCLEOTIDE SEQUENCE [LARGE SCALE GENOMIC DNA]</scope>
    <source>
        <strain>McKiel</strain>
    </source>
</reference>
<gene>
    <name evidence="1" type="primary">fni</name>
    <name type="ordered locus">A1E_02555</name>
</gene>
<accession>A8EYM2</accession>
<dbReference type="EC" id="5.3.3.2" evidence="1"/>
<dbReference type="EMBL" id="CP000409">
    <property type="protein sequence ID" value="ABV73455.1"/>
    <property type="molecule type" value="Genomic_DNA"/>
</dbReference>
<dbReference type="RefSeq" id="WP_012148652.1">
    <property type="nucleotide sequence ID" value="NC_009879.1"/>
</dbReference>
<dbReference type="SMR" id="A8EYM2"/>
<dbReference type="STRING" id="293613.A1E_02555"/>
<dbReference type="KEGG" id="rcm:A1E_02555"/>
<dbReference type="eggNOG" id="COG1304">
    <property type="taxonomic scope" value="Bacteria"/>
</dbReference>
<dbReference type="HOGENOM" id="CLU_065515_1_0_5"/>
<dbReference type="Proteomes" id="UP000007056">
    <property type="component" value="Chromosome"/>
</dbReference>
<dbReference type="GO" id="GO:0005737">
    <property type="term" value="C:cytoplasm"/>
    <property type="evidence" value="ECO:0007669"/>
    <property type="project" value="UniProtKB-SubCell"/>
</dbReference>
<dbReference type="GO" id="GO:0010181">
    <property type="term" value="F:FMN binding"/>
    <property type="evidence" value="ECO:0007669"/>
    <property type="project" value="UniProtKB-UniRule"/>
</dbReference>
<dbReference type="GO" id="GO:0004452">
    <property type="term" value="F:isopentenyl-diphosphate delta-isomerase activity"/>
    <property type="evidence" value="ECO:0007669"/>
    <property type="project" value="UniProtKB-UniRule"/>
</dbReference>
<dbReference type="GO" id="GO:0000287">
    <property type="term" value="F:magnesium ion binding"/>
    <property type="evidence" value="ECO:0007669"/>
    <property type="project" value="UniProtKB-UniRule"/>
</dbReference>
<dbReference type="GO" id="GO:0070402">
    <property type="term" value="F:NADPH binding"/>
    <property type="evidence" value="ECO:0007669"/>
    <property type="project" value="UniProtKB-UniRule"/>
</dbReference>
<dbReference type="GO" id="GO:0016491">
    <property type="term" value="F:oxidoreductase activity"/>
    <property type="evidence" value="ECO:0007669"/>
    <property type="project" value="InterPro"/>
</dbReference>
<dbReference type="GO" id="GO:0008299">
    <property type="term" value="P:isoprenoid biosynthetic process"/>
    <property type="evidence" value="ECO:0007669"/>
    <property type="project" value="UniProtKB-UniRule"/>
</dbReference>
<dbReference type="CDD" id="cd02811">
    <property type="entry name" value="IDI-2_FMN"/>
    <property type="match status" value="1"/>
</dbReference>
<dbReference type="Gene3D" id="3.20.20.70">
    <property type="entry name" value="Aldolase class I"/>
    <property type="match status" value="1"/>
</dbReference>
<dbReference type="HAMAP" id="MF_00354">
    <property type="entry name" value="Idi_2"/>
    <property type="match status" value="1"/>
</dbReference>
<dbReference type="InterPro" id="IPR013785">
    <property type="entry name" value="Aldolase_TIM"/>
</dbReference>
<dbReference type="InterPro" id="IPR000262">
    <property type="entry name" value="FMN-dep_DH"/>
</dbReference>
<dbReference type="InterPro" id="IPR011179">
    <property type="entry name" value="IPdP_isomerase"/>
</dbReference>
<dbReference type="NCBIfam" id="TIGR02151">
    <property type="entry name" value="IPP_isom_2"/>
    <property type="match status" value="1"/>
</dbReference>
<dbReference type="PANTHER" id="PTHR43665">
    <property type="entry name" value="ISOPENTENYL-DIPHOSPHATE DELTA-ISOMERASE"/>
    <property type="match status" value="1"/>
</dbReference>
<dbReference type="PANTHER" id="PTHR43665:SF1">
    <property type="entry name" value="ISOPENTENYL-DIPHOSPHATE DELTA-ISOMERASE"/>
    <property type="match status" value="1"/>
</dbReference>
<dbReference type="Pfam" id="PF01070">
    <property type="entry name" value="FMN_dh"/>
    <property type="match status" value="2"/>
</dbReference>
<dbReference type="PIRSF" id="PIRSF003314">
    <property type="entry name" value="IPP_isomerase"/>
    <property type="match status" value="1"/>
</dbReference>
<dbReference type="SUPFAM" id="SSF51395">
    <property type="entry name" value="FMN-linked oxidoreductases"/>
    <property type="match status" value="1"/>
</dbReference>
<sequence length="342" mass="37211">MLKNQDLDIERKQEHIEINLTKNIESTLKSGFESIQFIHNALPEINYDNIDTTTTFLGKALQAPILISSMTGGTARARDINYRLAEAAQKAGIAMGLGSMRVLLAAADTIKTFAVRHIAPDILLLANIGAVQLNYGVTPKECQYLVDATKADALILHLNVLQELTQPEGNRNWANLLPKIREVINYLSVPVIVKEVGYGLSKQVAKSLIDVGVKTLDIAGSGGTSWSQVEAYRAKNSLQNRIASSFINWGIPTLDSLKMVREISKNVSIIASGGLKSGIDGAKAIRMGANIFGLAGQLLKAVDNSEYLVSEEIQLIIKQLKITMLCTGSRTLKDLTKAEIKL</sequence>